<protein>
    <recommendedName>
        <fullName evidence="1">Proline--tRNA ligase</fullName>
        <ecNumber evidence="1">6.1.1.15</ecNumber>
    </recommendedName>
    <alternativeName>
        <fullName evidence="1">Prolyl-tRNA synthetase</fullName>
        <shortName evidence="1">ProRS</shortName>
    </alternativeName>
</protein>
<proteinExistence type="inferred from homology"/>
<reference key="1">
    <citation type="journal article" date="2011" name="Stand. Genomic Sci.">
        <title>Complete genome sequence of the halophilic and highly halotolerant Chromohalobacter salexigens type strain (1H11(T)).</title>
        <authorList>
            <person name="Copeland A."/>
            <person name="O'Connor K."/>
            <person name="Lucas S."/>
            <person name="Lapidus A."/>
            <person name="Berry K.W."/>
            <person name="Detter J.C."/>
            <person name="Del Rio T.G."/>
            <person name="Hammon N."/>
            <person name="Dalin E."/>
            <person name="Tice H."/>
            <person name="Pitluck S."/>
            <person name="Bruce D."/>
            <person name="Goodwin L."/>
            <person name="Han C."/>
            <person name="Tapia R."/>
            <person name="Saunders E."/>
            <person name="Schmutz J."/>
            <person name="Brettin T."/>
            <person name="Larimer F."/>
            <person name="Land M."/>
            <person name="Hauser L."/>
            <person name="Vargas C."/>
            <person name="Nieto J.J."/>
            <person name="Kyrpides N.C."/>
            <person name="Ivanova N."/>
            <person name="Goker M."/>
            <person name="Klenk H.P."/>
            <person name="Csonka L.N."/>
            <person name="Woyke T."/>
        </authorList>
    </citation>
    <scope>NUCLEOTIDE SEQUENCE [LARGE SCALE GENOMIC DNA]</scope>
    <source>
        <strain>ATCC BAA-138 / DSM 3043 / CIP 106854 / NCIMB 13768 / 1H11</strain>
    </source>
</reference>
<name>SYP_CHRSD</name>
<evidence type="ECO:0000255" key="1">
    <source>
        <dbReference type="HAMAP-Rule" id="MF_01569"/>
    </source>
</evidence>
<accession>Q1QVL8</accession>
<dbReference type="EC" id="6.1.1.15" evidence="1"/>
<dbReference type="EMBL" id="CP000285">
    <property type="protein sequence ID" value="ABE59490.1"/>
    <property type="molecule type" value="Genomic_DNA"/>
</dbReference>
<dbReference type="RefSeq" id="WP_011507436.1">
    <property type="nucleotide sequence ID" value="NC_007963.1"/>
</dbReference>
<dbReference type="SMR" id="Q1QVL8"/>
<dbReference type="STRING" id="290398.Csal_2139"/>
<dbReference type="GeneID" id="95334858"/>
<dbReference type="KEGG" id="csa:Csal_2139"/>
<dbReference type="eggNOG" id="COG0442">
    <property type="taxonomic scope" value="Bacteria"/>
</dbReference>
<dbReference type="HOGENOM" id="CLU_016739_0_0_6"/>
<dbReference type="OrthoDB" id="9809052at2"/>
<dbReference type="Proteomes" id="UP000000239">
    <property type="component" value="Chromosome"/>
</dbReference>
<dbReference type="GO" id="GO:0005829">
    <property type="term" value="C:cytosol"/>
    <property type="evidence" value="ECO:0007669"/>
    <property type="project" value="TreeGrafter"/>
</dbReference>
<dbReference type="GO" id="GO:0002161">
    <property type="term" value="F:aminoacyl-tRNA deacylase activity"/>
    <property type="evidence" value="ECO:0007669"/>
    <property type="project" value="InterPro"/>
</dbReference>
<dbReference type="GO" id="GO:0005524">
    <property type="term" value="F:ATP binding"/>
    <property type="evidence" value="ECO:0007669"/>
    <property type="project" value="UniProtKB-UniRule"/>
</dbReference>
<dbReference type="GO" id="GO:0004827">
    <property type="term" value="F:proline-tRNA ligase activity"/>
    <property type="evidence" value="ECO:0007669"/>
    <property type="project" value="UniProtKB-UniRule"/>
</dbReference>
<dbReference type="GO" id="GO:0006433">
    <property type="term" value="P:prolyl-tRNA aminoacylation"/>
    <property type="evidence" value="ECO:0007669"/>
    <property type="project" value="UniProtKB-UniRule"/>
</dbReference>
<dbReference type="CDD" id="cd04334">
    <property type="entry name" value="ProRS-INS"/>
    <property type="match status" value="1"/>
</dbReference>
<dbReference type="CDD" id="cd00861">
    <property type="entry name" value="ProRS_anticodon_short"/>
    <property type="match status" value="1"/>
</dbReference>
<dbReference type="CDD" id="cd00779">
    <property type="entry name" value="ProRS_core_prok"/>
    <property type="match status" value="1"/>
</dbReference>
<dbReference type="FunFam" id="3.30.930.10:FF:000043">
    <property type="entry name" value="Proline--tRNA ligase"/>
    <property type="match status" value="1"/>
</dbReference>
<dbReference type="FunFam" id="3.30.930.10:FF:000097">
    <property type="entry name" value="Proline--tRNA ligase"/>
    <property type="match status" value="1"/>
</dbReference>
<dbReference type="FunFam" id="3.40.50.800:FF:000006">
    <property type="entry name" value="Proline--tRNA ligase"/>
    <property type="match status" value="1"/>
</dbReference>
<dbReference type="FunFam" id="3.90.960.10:FF:000001">
    <property type="entry name" value="Proline--tRNA ligase"/>
    <property type="match status" value="1"/>
</dbReference>
<dbReference type="Gene3D" id="3.40.50.800">
    <property type="entry name" value="Anticodon-binding domain"/>
    <property type="match status" value="1"/>
</dbReference>
<dbReference type="Gene3D" id="3.30.930.10">
    <property type="entry name" value="Bira Bifunctional Protein, Domain 2"/>
    <property type="match status" value="2"/>
</dbReference>
<dbReference type="Gene3D" id="3.90.960.10">
    <property type="entry name" value="YbaK/aminoacyl-tRNA synthetase-associated domain"/>
    <property type="match status" value="1"/>
</dbReference>
<dbReference type="HAMAP" id="MF_01569">
    <property type="entry name" value="Pro_tRNA_synth_type1"/>
    <property type="match status" value="1"/>
</dbReference>
<dbReference type="InterPro" id="IPR002314">
    <property type="entry name" value="aa-tRNA-synt_IIb"/>
</dbReference>
<dbReference type="InterPro" id="IPR006195">
    <property type="entry name" value="aa-tRNA-synth_II"/>
</dbReference>
<dbReference type="InterPro" id="IPR045864">
    <property type="entry name" value="aa-tRNA-synth_II/BPL/LPL"/>
</dbReference>
<dbReference type="InterPro" id="IPR004154">
    <property type="entry name" value="Anticodon-bd"/>
</dbReference>
<dbReference type="InterPro" id="IPR036621">
    <property type="entry name" value="Anticodon-bd_dom_sf"/>
</dbReference>
<dbReference type="InterPro" id="IPR002316">
    <property type="entry name" value="Pro-tRNA-ligase_IIa"/>
</dbReference>
<dbReference type="InterPro" id="IPR004500">
    <property type="entry name" value="Pro-tRNA-synth_IIa_bac-type"/>
</dbReference>
<dbReference type="InterPro" id="IPR023717">
    <property type="entry name" value="Pro-tRNA-Synthase_IIa_type1"/>
</dbReference>
<dbReference type="InterPro" id="IPR050062">
    <property type="entry name" value="Pro-tRNA_synthetase"/>
</dbReference>
<dbReference type="InterPro" id="IPR044140">
    <property type="entry name" value="ProRS_anticodon_short"/>
</dbReference>
<dbReference type="InterPro" id="IPR033730">
    <property type="entry name" value="ProRS_core_prok"/>
</dbReference>
<dbReference type="InterPro" id="IPR036754">
    <property type="entry name" value="YbaK/aa-tRNA-synt-asso_dom_sf"/>
</dbReference>
<dbReference type="InterPro" id="IPR007214">
    <property type="entry name" value="YbaK/aa-tRNA-synth-assoc-dom"/>
</dbReference>
<dbReference type="NCBIfam" id="NF006625">
    <property type="entry name" value="PRK09194.1"/>
    <property type="match status" value="1"/>
</dbReference>
<dbReference type="NCBIfam" id="TIGR00409">
    <property type="entry name" value="proS_fam_II"/>
    <property type="match status" value="1"/>
</dbReference>
<dbReference type="PANTHER" id="PTHR42753">
    <property type="entry name" value="MITOCHONDRIAL RIBOSOME PROTEIN L39/PROLYL-TRNA LIGASE FAMILY MEMBER"/>
    <property type="match status" value="1"/>
</dbReference>
<dbReference type="PANTHER" id="PTHR42753:SF2">
    <property type="entry name" value="PROLINE--TRNA LIGASE"/>
    <property type="match status" value="1"/>
</dbReference>
<dbReference type="Pfam" id="PF03129">
    <property type="entry name" value="HGTP_anticodon"/>
    <property type="match status" value="1"/>
</dbReference>
<dbReference type="Pfam" id="PF00587">
    <property type="entry name" value="tRNA-synt_2b"/>
    <property type="match status" value="1"/>
</dbReference>
<dbReference type="Pfam" id="PF04073">
    <property type="entry name" value="tRNA_edit"/>
    <property type="match status" value="1"/>
</dbReference>
<dbReference type="PIRSF" id="PIRSF001535">
    <property type="entry name" value="ProRS_1"/>
    <property type="match status" value="1"/>
</dbReference>
<dbReference type="PRINTS" id="PR01046">
    <property type="entry name" value="TRNASYNTHPRO"/>
</dbReference>
<dbReference type="SUPFAM" id="SSF52954">
    <property type="entry name" value="Class II aaRS ABD-related"/>
    <property type="match status" value="1"/>
</dbReference>
<dbReference type="SUPFAM" id="SSF55681">
    <property type="entry name" value="Class II aaRS and biotin synthetases"/>
    <property type="match status" value="1"/>
</dbReference>
<dbReference type="SUPFAM" id="SSF55826">
    <property type="entry name" value="YbaK/ProRS associated domain"/>
    <property type="match status" value="1"/>
</dbReference>
<dbReference type="PROSITE" id="PS50862">
    <property type="entry name" value="AA_TRNA_LIGASE_II"/>
    <property type="match status" value="1"/>
</dbReference>
<keyword id="KW-0030">Aminoacyl-tRNA synthetase</keyword>
<keyword id="KW-0067">ATP-binding</keyword>
<keyword id="KW-0963">Cytoplasm</keyword>
<keyword id="KW-0436">Ligase</keyword>
<keyword id="KW-0547">Nucleotide-binding</keyword>
<keyword id="KW-0648">Protein biosynthesis</keyword>
<keyword id="KW-1185">Reference proteome</keyword>
<comment type="function">
    <text evidence="1">Catalyzes the attachment of proline to tRNA(Pro) in a two-step reaction: proline is first activated by ATP to form Pro-AMP and then transferred to the acceptor end of tRNA(Pro). As ProRS can inadvertently accommodate and process non-cognate amino acids such as alanine and cysteine, to avoid such errors it has two additional distinct editing activities against alanine. One activity is designated as 'pretransfer' editing and involves the tRNA(Pro)-independent hydrolysis of activated Ala-AMP. The other activity is designated 'posttransfer' editing and involves deacylation of mischarged Ala-tRNA(Pro). The misacylated Cys-tRNA(Pro) is not edited by ProRS.</text>
</comment>
<comment type="catalytic activity">
    <reaction evidence="1">
        <text>tRNA(Pro) + L-proline + ATP = L-prolyl-tRNA(Pro) + AMP + diphosphate</text>
        <dbReference type="Rhea" id="RHEA:14305"/>
        <dbReference type="Rhea" id="RHEA-COMP:9700"/>
        <dbReference type="Rhea" id="RHEA-COMP:9702"/>
        <dbReference type="ChEBI" id="CHEBI:30616"/>
        <dbReference type="ChEBI" id="CHEBI:33019"/>
        <dbReference type="ChEBI" id="CHEBI:60039"/>
        <dbReference type="ChEBI" id="CHEBI:78442"/>
        <dbReference type="ChEBI" id="CHEBI:78532"/>
        <dbReference type="ChEBI" id="CHEBI:456215"/>
        <dbReference type="EC" id="6.1.1.15"/>
    </reaction>
</comment>
<comment type="subunit">
    <text evidence="1">Homodimer.</text>
</comment>
<comment type="subcellular location">
    <subcellularLocation>
        <location evidence="1">Cytoplasm</location>
    </subcellularLocation>
</comment>
<comment type="domain">
    <text evidence="1">Consists of three domains: the N-terminal catalytic domain, the editing domain and the C-terminal anticodon-binding domain.</text>
</comment>
<comment type="similarity">
    <text evidence="1">Belongs to the class-II aminoacyl-tRNA synthetase family. ProS type 1 subfamily.</text>
</comment>
<sequence>MRASQLLISTLKETPADADIVSHQLMLRAGMIRRLSSGLYTWLPLGLRTLRKVENIVREEMNRAGAQEVLMPSIQPAELWQESGRWDQYGNLLLRIRDRHERDFCYGPTHEEVITDLVRNEIRSYKQLPSNFYQIQTKFRDETRPRFGVMRAREFIMKDAYSFDIDQAGLQRSYDAMYDAYMRIFTRLGLDFRAVEADNGDIGGSGSHEFQVLADSGEDAVIFSTGSDYAANIEKAEALPAPLGETPERPAPQEELRLVDTPNARTIATLVEQHGLPIEKTIKTLMVHGSEGGLVALLVRGDHELNEVKAENLPEVAAPLTMASEEEIRAAVGAGPGSLGPVNLDMPLIIDRSVALMSDFGAGANIDGQHYFGINWERDVALPKVADLRNVVEGDPSPDGKGTLSIARGIEVGHVFQLGTKYSTAMNATVLDDNGQAVPLLMGCYGIGVTRVVAAAIEQNHDAGGIIWPDAIAPFEIALVPMNAHKSERVREYADTLYQQLSDAGFDVLIDDRDLRPGVKFADQELIGIPHRVVIGDRGLDNDELEYKGRRDSDVTMVPTEGLLSFLRERITK</sequence>
<feature type="chain" id="PRO_0000248671" description="Proline--tRNA ligase">
    <location>
        <begin position="1"/>
        <end position="573"/>
    </location>
</feature>
<organism>
    <name type="scientific">Chromohalobacter salexigens (strain ATCC BAA-138 / DSM 3043 / CIP 106854 / NCIMB 13768 / 1H11)</name>
    <dbReference type="NCBI Taxonomy" id="290398"/>
    <lineage>
        <taxon>Bacteria</taxon>
        <taxon>Pseudomonadati</taxon>
        <taxon>Pseudomonadota</taxon>
        <taxon>Gammaproteobacteria</taxon>
        <taxon>Oceanospirillales</taxon>
        <taxon>Halomonadaceae</taxon>
        <taxon>Chromohalobacter</taxon>
    </lineage>
</organism>
<gene>
    <name evidence="1" type="primary">proS</name>
    <name type="ordered locus">Csal_2139</name>
</gene>